<feature type="chain" id="PRO_1000043078" description="Anthranilate phosphoribosyltransferase">
    <location>
        <begin position="1"/>
        <end position="340"/>
    </location>
</feature>
<feature type="binding site" evidence="1">
    <location>
        <position position="82"/>
    </location>
    <ligand>
        <name>5-phospho-alpha-D-ribose 1-diphosphate</name>
        <dbReference type="ChEBI" id="CHEBI:58017"/>
    </ligand>
</feature>
<feature type="binding site" evidence="1">
    <location>
        <position position="82"/>
    </location>
    <ligand>
        <name>anthranilate</name>
        <dbReference type="ChEBI" id="CHEBI:16567"/>
        <label>1</label>
    </ligand>
</feature>
<feature type="binding site" evidence="1">
    <location>
        <begin position="85"/>
        <end position="86"/>
    </location>
    <ligand>
        <name>5-phospho-alpha-D-ribose 1-diphosphate</name>
        <dbReference type="ChEBI" id="CHEBI:58017"/>
    </ligand>
</feature>
<feature type="binding site" evidence="1">
    <location>
        <position position="90"/>
    </location>
    <ligand>
        <name>5-phospho-alpha-D-ribose 1-diphosphate</name>
        <dbReference type="ChEBI" id="CHEBI:58017"/>
    </ligand>
</feature>
<feature type="binding site" evidence="1">
    <location>
        <begin position="92"/>
        <end position="95"/>
    </location>
    <ligand>
        <name>5-phospho-alpha-D-ribose 1-diphosphate</name>
        <dbReference type="ChEBI" id="CHEBI:58017"/>
    </ligand>
</feature>
<feature type="binding site" evidence="1">
    <location>
        <position position="94"/>
    </location>
    <ligand>
        <name>Mg(2+)</name>
        <dbReference type="ChEBI" id="CHEBI:18420"/>
        <label>1</label>
    </ligand>
</feature>
<feature type="binding site" evidence="1">
    <location>
        <begin position="110"/>
        <end position="118"/>
    </location>
    <ligand>
        <name>5-phospho-alpha-D-ribose 1-diphosphate</name>
        <dbReference type="ChEBI" id="CHEBI:58017"/>
    </ligand>
</feature>
<feature type="binding site" evidence="1">
    <location>
        <position position="122"/>
    </location>
    <ligand>
        <name>5-phospho-alpha-D-ribose 1-diphosphate</name>
        <dbReference type="ChEBI" id="CHEBI:58017"/>
    </ligand>
</feature>
<feature type="binding site" evidence="1">
    <location>
        <position position="168"/>
    </location>
    <ligand>
        <name>anthranilate</name>
        <dbReference type="ChEBI" id="CHEBI:16567"/>
        <label>2</label>
    </ligand>
</feature>
<feature type="binding site" evidence="1">
    <location>
        <position position="227"/>
    </location>
    <ligand>
        <name>Mg(2+)</name>
        <dbReference type="ChEBI" id="CHEBI:18420"/>
        <label>2</label>
    </ligand>
</feature>
<feature type="binding site" evidence="1">
    <location>
        <position position="228"/>
    </location>
    <ligand>
        <name>Mg(2+)</name>
        <dbReference type="ChEBI" id="CHEBI:18420"/>
        <label>1</label>
    </ligand>
</feature>
<feature type="binding site" evidence="1">
    <location>
        <position position="228"/>
    </location>
    <ligand>
        <name>Mg(2+)</name>
        <dbReference type="ChEBI" id="CHEBI:18420"/>
        <label>2</label>
    </ligand>
</feature>
<organism>
    <name type="scientific">Hydrogenovibrio crunogenus (strain DSM 25203 / XCL-2)</name>
    <name type="common">Thiomicrospira crunogena</name>
    <dbReference type="NCBI Taxonomy" id="317025"/>
    <lineage>
        <taxon>Bacteria</taxon>
        <taxon>Pseudomonadati</taxon>
        <taxon>Pseudomonadota</taxon>
        <taxon>Gammaproteobacteria</taxon>
        <taxon>Thiotrichales</taxon>
        <taxon>Piscirickettsiaceae</taxon>
        <taxon>Hydrogenovibrio</taxon>
    </lineage>
</organism>
<dbReference type="EC" id="2.4.2.18" evidence="1"/>
<dbReference type="EMBL" id="CP000109">
    <property type="protein sequence ID" value="ABB40864.1"/>
    <property type="molecule type" value="Genomic_DNA"/>
</dbReference>
<dbReference type="SMR" id="Q31J09"/>
<dbReference type="STRING" id="317025.Tcr_0268"/>
<dbReference type="KEGG" id="tcx:Tcr_0268"/>
<dbReference type="eggNOG" id="COG0547">
    <property type="taxonomic scope" value="Bacteria"/>
</dbReference>
<dbReference type="HOGENOM" id="CLU_034315_2_1_6"/>
<dbReference type="OrthoDB" id="9806430at2"/>
<dbReference type="UniPathway" id="UPA00035">
    <property type="reaction ID" value="UER00041"/>
</dbReference>
<dbReference type="GO" id="GO:0005829">
    <property type="term" value="C:cytosol"/>
    <property type="evidence" value="ECO:0007669"/>
    <property type="project" value="TreeGrafter"/>
</dbReference>
<dbReference type="GO" id="GO:0004048">
    <property type="term" value="F:anthranilate phosphoribosyltransferase activity"/>
    <property type="evidence" value="ECO:0007669"/>
    <property type="project" value="UniProtKB-UniRule"/>
</dbReference>
<dbReference type="GO" id="GO:0000287">
    <property type="term" value="F:magnesium ion binding"/>
    <property type="evidence" value="ECO:0007669"/>
    <property type="project" value="UniProtKB-UniRule"/>
</dbReference>
<dbReference type="GO" id="GO:0000162">
    <property type="term" value="P:L-tryptophan biosynthetic process"/>
    <property type="evidence" value="ECO:0007669"/>
    <property type="project" value="UniProtKB-UniRule"/>
</dbReference>
<dbReference type="FunFam" id="1.20.970.10:FF:000006">
    <property type="entry name" value="Anthranilate phosphoribosyltransferase"/>
    <property type="match status" value="1"/>
</dbReference>
<dbReference type="FunFam" id="3.40.1030.10:FF:000002">
    <property type="entry name" value="Anthranilate phosphoribosyltransferase"/>
    <property type="match status" value="1"/>
</dbReference>
<dbReference type="Gene3D" id="3.40.1030.10">
    <property type="entry name" value="Nucleoside phosphorylase/phosphoribosyltransferase catalytic domain"/>
    <property type="match status" value="1"/>
</dbReference>
<dbReference type="Gene3D" id="1.20.970.10">
    <property type="entry name" value="Transferase, Pyrimidine Nucleoside Phosphorylase, Chain C"/>
    <property type="match status" value="1"/>
</dbReference>
<dbReference type="HAMAP" id="MF_00211">
    <property type="entry name" value="TrpD"/>
    <property type="match status" value="1"/>
</dbReference>
<dbReference type="InterPro" id="IPR005940">
    <property type="entry name" value="Anthranilate_Pribosyl_Tfrase"/>
</dbReference>
<dbReference type="InterPro" id="IPR000312">
    <property type="entry name" value="Glycosyl_Trfase_fam3"/>
</dbReference>
<dbReference type="InterPro" id="IPR017459">
    <property type="entry name" value="Glycosyl_Trfase_fam3_N_dom"/>
</dbReference>
<dbReference type="InterPro" id="IPR036320">
    <property type="entry name" value="Glycosyl_Trfase_fam3_N_dom_sf"/>
</dbReference>
<dbReference type="InterPro" id="IPR035902">
    <property type="entry name" value="Nuc_phospho_transferase"/>
</dbReference>
<dbReference type="NCBIfam" id="TIGR01245">
    <property type="entry name" value="trpD"/>
    <property type="match status" value="1"/>
</dbReference>
<dbReference type="PANTHER" id="PTHR43285">
    <property type="entry name" value="ANTHRANILATE PHOSPHORIBOSYLTRANSFERASE"/>
    <property type="match status" value="1"/>
</dbReference>
<dbReference type="PANTHER" id="PTHR43285:SF2">
    <property type="entry name" value="ANTHRANILATE PHOSPHORIBOSYLTRANSFERASE"/>
    <property type="match status" value="1"/>
</dbReference>
<dbReference type="Pfam" id="PF02885">
    <property type="entry name" value="Glycos_trans_3N"/>
    <property type="match status" value="1"/>
</dbReference>
<dbReference type="Pfam" id="PF00591">
    <property type="entry name" value="Glycos_transf_3"/>
    <property type="match status" value="1"/>
</dbReference>
<dbReference type="SUPFAM" id="SSF52418">
    <property type="entry name" value="Nucleoside phosphorylase/phosphoribosyltransferase catalytic domain"/>
    <property type="match status" value="1"/>
</dbReference>
<dbReference type="SUPFAM" id="SSF47648">
    <property type="entry name" value="Nucleoside phosphorylase/phosphoribosyltransferase N-terminal domain"/>
    <property type="match status" value="1"/>
</dbReference>
<gene>
    <name evidence="1" type="primary">trpD</name>
    <name type="ordered locus">Tcr_0268</name>
</gene>
<evidence type="ECO:0000255" key="1">
    <source>
        <dbReference type="HAMAP-Rule" id="MF_00211"/>
    </source>
</evidence>
<protein>
    <recommendedName>
        <fullName evidence="1">Anthranilate phosphoribosyltransferase</fullName>
        <ecNumber evidence="1">2.4.2.18</ecNumber>
    </recommendedName>
</protein>
<sequence>MQLRDALEQLLNKHDLTAEQMEWVMQMLMSGQATSAQIAAILVALRAKGETVEEITAAASVMRSLATQVTLTDKTHMVDTCGTGGDGANTFNISTASAFVAAAAGAKVAKHGSRSVSSQSGSADLLEKAGVNLNLTPEQVAECVETVGVGFMYAPAHHSAMKHVIGVRKEIGVRTLFNILGPLTNPAQAPAQVLGVYDSSLLMPFAQVLRELGSKHVMIVHAQDGLDEISIASLTDVAELKEGVITQWTIDPSEYDADHPDLSELKIDSAQDSLNIIHAVLANDHSAAADIVCLNAGASIYVSGVVSTYAEGVQMAKNVIANGQARTLFNQFVEKTQSFA</sequence>
<proteinExistence type="inferred from homology"/>
<accession>Q31J09</accession>
<comment type="function">
    <text evidence="1">Catalyzes the transfer of the phosphoribosyl group of 5-phosphorylribose-1-pyrophosphate (PRPP) to anthranilate to yield N-(5'-phosphoribosyl)-anthranilate (PRA).</text>
</comment>
<comment type="catalytic activity">
    <reaction evidence="1">
        <text>N-(5-phospho-beta-D-ribosyl)anthranilate + diphosphate = 5-phospho-alpha-D-ribose 1-diphosphate + anthranilate</text>
        <dbReference type="Rhea" id="RHEA:11768"/>
        <dbReference type="ChEBI" id="CHEBI:16567"/>
        <dbReference type="ChEBI" id="CHEBI:18277"/>
        <dbReference type="ChEBI" id="CHEBI:33019"/>
        <dbReference type="ChEBI" id="CHEBI:58017"/>
        <dbReference type="EC" id="2.4.2.18"/>
    </reaction>
</comment>
<comment type="cofactor">
    <cofactor evidence="1">
        <name>Mg(2+)</name>
        <dbReference type="ChEBI" id="CHEBI:18420"/>
    </cofactor>
    <text evidence="1">Binds 2 magnesium ions per monomer.</text>
</comment>
<comment type="pathway">
    <text evidence="1">Amino-acid biosynthesis; L-tryptophan biosynthesis; L-tryptophan from chorismate: step 2/5.</text>
</comment>
<comment type="subunit">
    <text evidence="1">Homodimer.</text>
</comment>
<comment type="similarity">
    <text evidence="1">Belongs to the anthranilate phosphoribosyltransferase family.</text>
</comment>
<keyword id="KW-0028">Amino-acid biosynthesis</keyword>
<keyword id="KW-0057">Aromatic amino acid biosynthesis</keyword>
<keyword id="KW-0328">Glycosyltransferase</keyword>
<keyword id="KW-0460">Magnesium</keyword>
<keyword id="KW-0479">Metal-binding</keyword>
<keyword id="KW-0808">Transferase</keyword>
<keyword id="KW-0822">Tryptophan biosynthesis</keyword>
<reference key="1">
    <citation type="journal article" date="2006" name="PLoS Biol.">
        <title>The genome of deep-sea vent chemolithoautotroph Thiomicrospira crunogena XCL-2.</title>
        <authorList>
            <person name="Scott K.M."/>
            <person name="Sievert S.M."/>
            <person name="Abril F.N."/>
            <person name="Ball L.A."/>
            <person name="Barrett C.J."/>
            <person name="Blake R.A."/>
            <person name="Boller A.J."/>
            <person name="Chain P.S.G."/>
            <person name="Clark J.A."/>
            <person name="Davis C.R."/>
            <person name="Detter C."/>
            <person name="Do K.F."/>
            <person name="Dobrinski K.P."/>
            <person name="Faza B.I."/>
            <person name="Fitzpatrick K.A."/>
            <person name="Freyermuth S.K."/>
            <person name="Harmer T.L."/>
            <person name="Hauser L.J."/>
            <person name="Huegler M."/>
            <person name="Kerfeld C.A."/>
            <person name="Klotz M.G."/>
            <person name="Kong W.W."/>
            <person name="Land M."/>
            <person name="Lapidus A."/>
            <person name="Larimer F.W."/>
            <person name="Longo D.L."/>
            <person name="Lucas S."/>
            <person name="Malfatti S.A."/>
            <person name="Massey S.E."/>
            <person name="Martin D.D."/>
            <person name="McCuddin Z."/>
            <person name="Meyer F."/>
            <person name="Moore J.L."/>
            <person name="Ocampo L.H. Jr."/>
            <person name="Paul J.H."/>
            <person name="Paulsen I.T."/>
            <person name="Reep D.K."/>
            <person name="Ren Q."/>
            <person name="Ross R.L."/>
            <person name="Sato P.Y."/>
            <person name="Thomas P."/>
            <person name="Tinkham L.E."/>
            <person name="Zeruth G.T."/>
        </authorList>
    </citation>
    <scope>NUCLEOTIDE SEQUENCE [LARGE SCALE GENOMIC DNA]</scope>
    <source>
        <strain>DSM 25203 / XCL-2</strain>
    </source>
</reference>
<name>TRPD_HYDCU</name>